<dbReference type="EMBL" id="AM232694">
    <property type="protein sequence ID" value="CAJ87640.1"/>
    <property type="molecule type" value="mRNA"/>
</dbReference>
<dbReference type="EMBL" id="AM232693">
    <property type="protein sequence ID" value="CAJ81653.1"/>
    <property type="molecule type" value="mRNA"/>
</dbReference>
<dbReference type="SMR" id="Q1ELU5"/>
<dbReference type="ArachnoServer" id="AS000054">
    <property type="toxin name" value="M-zodatoxin-Lt4a"/>
</dbReference>
<dbReference type="GO" id="GO:0005576">
    <property type="term" value="C:extracellular region"/>
    <property type="evidence" value="ECO:0007669"/>
    <property type="project" value="UniProtKB-SubCell"/>
</dbReference>
<dbReference type="GO" id="GO:0090729">
    <property type="term" value="F:toxin activity"/>
    <property type="evidence" value="ECO:0007669"/>
    <property type="project" value="UniProtKB-KW"/>
</dbReference>
<dbReference type="GO" id="GO:0042742">
    <property type="term" value="P:defense response to bacterium"/>
    <property type="evidence" value="ECO:0007669"/>
    <property type="project" value="UniProtKB-KW"/>
</dbReference>
<dbReference type="GO" id="GO:0050832">
    <property type="term" value="P:defense response to fungus"/>
    <property type="evidence" value="ECO:0007669"/>
    <property type="project" value="UniProtKB-KW"/>
</dbReference>
<dbReference type="GO" id="GO:0031640">
    <property type="term" value="P:killing of cells of another organism"/>
    <property type="evidence" value="ECO:0007669"/>
    <property type="project" value="UniProtKB-KW"/>
</dbReference>
<dbReference type="InterPro" id="IPR018802">
    <property type="entry name" value="Latarcin_precursor"/>
</dbReference>
<dbReference type="Pfam" id="PF10279">
    <property type="entry name" value="Latarcin"/>
    <property type="match status" value="2"/>
</dbReference>
<keyword id="KW-0025">Alternative splicing</keyword>
<keyword id="KW-0027">Amidation</keyword>
<keyword id="KW-0044">Antibiotic</keyword>
<keyword id="KW-0929">Antimicrobial</keyword>
<keyword id="KW-0903">Direct protein sequencing</keyword>
<keyword id="KW-0295">Fungicide</keyword>
<keyword id="KW-0677">Repeat</keyword>
<keyword id="KW-0964">Secreted</keyword>
<keyword id="KW-0732">Signal</keyword>
<keyword id="KW-0800">Toxin</keyword>
<accession>Q1ELU5</accession>
<accession>Q1ELU6</accession>
<organism>
    <name type="scientific">Lachesana tarabaevi</name>
    <name type="common">Spider</name>
    <dbReference type="NCBI Taxonomy" id="379576"/>
    <lineage>
        <taxon>Eukaryota</taxon>
        <taxon>Metazoa</taxon>
        <taxon>Ecdysozoa</taxon>
        <taxon>Arthropoda</taxon>
        <taxon>Chelicerata</taxon>
        <taxon>Arachnida</taxon>
        <taxon>Araneae</taxon>
        <taxon>Araneomorphae</taxon>
        <taxon>Entelegynae</taxon>
        <taxon>Entelegynae incertae sedis</taxon>
        <taxon>Zodariidae</taxon>
        <taxon>Lachesana</taxon>
    </lineage>
</organism>
<sequence length="207" mass="23509">MKFSIIALALAVAFVCVAESRSEEEGYDVSEEIQAEELEEAERGGIDRKLMEVVNNLRKVQGREDSEEAGRGGINRKLMEMVNNLRKVQGREDSEEAGRGGINRKLMEMVNNLRKVQGREDSEEAGRGGINRKLMEMVNNLRKVQGREDSEEAGRGGINRKLMEMVNNLRKVQGREDTEEARGLKDKFKSMGEKLKQYIQTWKAKFG</sequence>
<feature type="signal peptide" evidence="2">
    <location>
        <begin position="1"/>
        <end position="22"/>
    </location>
</feature>
<feature type="propeptide" id="PRO_0000249744" evidence="1">
    <location>
        <begin position="23"/>
        <end position="43"/>
    </location>
</feature>
<feature type="peptide" id="PRO_0000434678" description="Repetitive polypeptide element type 1a" evidence="4">
    <location>
        <begin position="44"/>
        <end position="61"/>
    </location>
</feature>
<feature type="propeptide" id="PRO_0000434679" evidence="4">
    <location>
        <begin position="63"/>
        <end position="71"/>
    </location>
</feature>
<feature type="peptide" id="PRO_0000434680" description="Repetitive polypeptide element type 1b" evidence="4">
    <location>
        <begin position="72"/>
        <end position="89"/>
    </location>
</feature>
<feature type="propeptide" id="PRO_0000434681" evidence="4">
    <location>
        <begin position="91"/>
        <end position="99"/>
    </location>
</feature>
<feature type="peptide" id="PRO_0000434682" description="Repetitive polypeptide element type 1b" evidence="4">
    <location>
        <begin position="100"/>
        <end position="117"/>
    </location>
</feature>
<feature type="propeptide" id="PRO_0000434683" evidence="4">
    <location>
        <begin position="119"/>
        <end position="127"/>
    </location>
</feature>
<feature type="peptide" id="PRO_0000434684" description="Repetitive polypeptide element type 1b" evidence="4">
    <location>
        <begin position="128"/>
        <end position="145"/>
    </location>
</feature>
<feature type="propeptide" id="PRO_0000434685" evidence="4">
    <location>
        <begin position="147"/>
        <end position="155"/>
    </location>
</feature>
<feature type="peptide" id="PRO_0000434686" description="Repetitive polypeptide element type 1b" evidence="4">
    <location>
        <begin position="156"/>
        <end position="173"/>
    </location>
</feature>
<feature type="propeptide" id="PRO_0000434687" evidence="4">
    <location>
        <begin position="175"/>
        <end position="182"/>
    </location>
</feature>
<feature type="peptide" id="PRO_0000249745" description="M-zodatoxin-Lt4a peptide" evidence="3">
    <location>
        <begin position="183"/>
        <end position="206"/>
    </location>
</feature>
<feature type="short sequence motif" description="Processing quadruplet motif 1" evidence="6">
    <location>
        <begin position="40"/>
        <end position="43"/>
    </location>
</feature>
<feature type="short sequence motif" description="Inverted processing quadruplet motif 1" evidence="6">
    <location>
        <begin position="63"/>
        <end position="66"/>
    </location>
</feature>
<feature type="short sequence motif" description="Processing quadruplet motif 2" evidence="6">
    <location>
        <begin position="68"/>
        <end position="71"/>
    </location>
</feature>
<feature type="short sequence motif" description="Inverted processing quadruplet motif 2" evidence="6">
    <location>
        <begin position="91"/>
        <end position="94"/>
    </location>
</feature>
<feature type="short sequence motif" description="Processing quadruplet motif 3" evidence="6">
    <location>
        <begin position="96"/>
        <end position="99"/>
    </location>
</feature>
<feature type="short sequence motif" description="Inverted processing quadruplet motif 3" evidence="6">
    <location>
        <begin position="119"/>
        <end position="122"/>
    </location>
</feature>
<feature type="short sequence motif" description="Processing quadruplet motif 4" evidence="6">
    <location>
        <begin position="124"/>
        <end position="127"/>
    </location>
</feature>
<feature type="short sequence motif" description="Inverted processing quadruplet motif 4" evidence="6">
    <location>
        <begin position="147"/>
        <end position="150"/>
    </location>
</feature>
<feature type="short sequence motif" description="Processing quadruplet motif 5" evidence="6">
    <location>
        <begin position="152"/>
        <end position="155"/>
    </location>
</feature>
<feature type="short sequence motif" description="Inverted processing quadruplet motif 5" evidence="6">
    <location>
        <begin position="175"/>
        <end position="178"/>
    </location>
</feature>
<feature type="short sequence motif" description="Processing quadruplet motif 6" evidence="6">
    <location>
        <begin position="179"/>
        <end position="182"/>
    </location>
</feature>
<feature type="modified residue" description="Glutamine amide" evidence="4">
    <location>
        <position position="61"/>
    </location>
</feature>
<feature type="modified residue" description="Glutamine amide" evidence="4">
    <location>
        <position position="89"/>
    </location>
</feature>
<feature type="modified residue" description="Glutamine amide" evidence="4">
    <location>
        <position position="117"/>
    </location>
</feature>
<feature type="modified residue" description="Glutamine amide" evidence="4">
    <location>
        <position position="145"/>
    </location>
</feature>
<feature type="modified residue" description="Glutamine amide" evidence="4">
    <location>
        <position position="173"/>
    </location>
</feature>
<feature type="modified residue" description="Phenylalanine amide" evidence="3">
    <location>
        <position position="206"/>
    </location>
</feature>
<feature type="splice variant" id="VSP_020546" description="In isoform 1." evidence="5">
    <location>
        <begin position="149"/>
        <end position="176"/>
    </location>
</feature>
<protein>
    <recommendedName>
        <fullName evidence="7">M-zodatoxin-Lt4a</fullName>
        <shortName evidence="7">M-ZDTX-Lt4a</shortName>
    </recommendedName>
    <component>
        <recommendedName>
            <fullName evidence="6">Repetitive polypeptide element type 1a</fullName>
            <shortName evidence="6">Rpe 1a</shortName>
        </recommendedName>
    </component>
    <component>
        <recommendedName>
            <fullName evidence="6">Repetitive polypeptide element type 1b</fullName>
            <shortName evidence="6">Rpe 1b</shortName>
        </recommendedName>
    </component>
    <component>
        <recommendedName>
            <fullName evidence="7">M-zodatoxin-Lt4a peptide</fullName>
        </recommendedName>
        <alternativeName>
            <fullName evidence="5">Latarcin-4a</fullName>
            <shortName evidence="5">Ltc-4a</shortName>
        </alternativeName>
    </component>
</protein>
<reference evidence="7 10" key="1">
    <citation type="journal article" date="2006" name="J. Biol. Chem.">
        <title>Latarcins, antimicrobial and cytolytic peptides from the venom of the spider Lachesana tarabaevi (Zodariidae) that exemplify biomolecular diversity.</title>
        <authorList>
            <person name="Kozlov S.A."/>
            <person name="Vassilevski A.A."/>
            <person name="Feofanov A.V."/>
            <person name="Surovoy A.Y."/>
            <person name="Karpunin D.V."/>
            <person name="Grishin E.V."/>
        </authorList>
    </citation>
    <scope>NUCLEOTIDE SEQUENCE [MRNA] (ISOFORMS 1 AND 2)</scope>
    <scope>PROTEIN SEQUENCE OF 183-206</scope>
    <scope>SYNTHESIS OF 183-206</scope>
    <scope>AMIDATION AT PHE-206</scope>
    <scope>FUNCTION</scope>
    <scope>SUBCELLULAR LOCATION</scope>
    <scope>DOMAIN</scope>
    <scope>MASS SPECTROMETRY</scope>
    <source>
        <tissue>Venom</tissue>
        <tissue>Venom gland</tissue>
    </source>
</reference>
<reference key="2">
    <citation type="journal article" date="2016" name="Biochem. J.">
        <title>Lachesana tarabaevi, an expert in membrane-active toxins.</title>
        <authorList>
            <person name="Kuzmenkov A.I."/>
            <person name="Sachkova M.Y."/>
            <person name="Kovalchuk S.I."/>
            <person name="Grishin E.V."/>
            <person name="Vassilevski A.A."/>
        </authorList>
    </citation>
    <scope>PROTEIN SEQUENCE OF 44-61; 72-89; 100-117; 128-145 AND 156-173</scope>
    <scope>FUNCTION OF REPETITIVE POLYPEPTIDE ELEMENTS</scope>
    <scope>SUBCELLULAR LOCATION</scope>
    <scope>PQM MOTIF</scope>
    <scope>MASS SPECTROMETRY</scope>
    <scope>AMIDATION AT GLN-61; GLN-89; GLN-117; GLN-145 AND GLN-173</scope>
    <source>
        <tissue>Venom</tissue>
    </source>
</reference>
<name>LAT4A_LACTA</name>
<evidence type="ECO:0000250" key="1"/>
<evidence type="ECO:0000255" key="2"/>
<evidence type="ECO:0000269" key="3">
    <source>
    </source>
</evidence>
<evidence type="ECO:0000269" key="4">
    <source>
    </source>
</evidence>
<evidence type="ECO:0000303" key="5">
    <source>
    </source>
</evidence>
<evidence type="ECO:0000303" key="6">
    <source>
    </source>
</evidence>
<evidence type="ECO:0000305" key="7"/>
<evidence type="ECO:0000305" key="8">
    <source>
    </source>
</evidence>
<evidence type="ECO:0000305" key="9">
    <source>
    </source>
</evidence>
<evidence type="ECO:0000312" key="10">
    <source>
        <dbReference type="EMBL" id="CAJ87640.1"/>
    </source>
</evidence>
<comment type="function">
    <text evidence="3">M-zodatoxin-Lt4a: Has antimicrobial activity against Gram-positive bacteria (A.globiformis VKM Ac-1112 (MIC=0.3 uM), and B.subtilis VKM B-501 (MIC=1.1 uM)), Gram-negative bacteria (E.coli DH5-alpha (MIC=4.5 uM), E.coli MH1 (MIC=3.2 uM), and P.aeruginosa PAO1 (MIC&gt;35 uM)), and yeasts (P.pastoris GS115 (MIC=36 uM), and S.cerevisiae Y190 (MIC=18 uM)). Does not have hemolytic activity against rabbit erythrocytes. Causes paralysis, but is not lethal when injected into insect (M.domestica) larvae.</text>
</comment>
<comment type="function">
    <molecule>Repetitive polypeptide element type 1a</molecule>
    <text evidence="4">Shows no antimicrobial activity against Gram-positive bacterium B.subtilis B-501 or Gram-negative bacterium E.coli DH5-alpha at concentrations up to 20 uM.</text>
</comment>
<comment type="function">
    <molecule>Repetitive polypeptide element type 1b</molecule>
    <text evidence="4">Shows no antimicrobial activity against Gram-positive bacterium B.subtilis B-501 or Gram-negative bacterium E.coli DH5-alpha at concentrations up to 20 uM. Shows no toxicity towards insect (S.carnaria) larvae.</text>
</comment>
<comment type="subcellular location">
    <subcellularLocation>
        <location evidence="3 4">Secreted</location>
    </subcellularLocation>
</comment>
<comment type="alternative products">
    <event type="alternative splicing"/>
    <isoform>
        <id>Q1ELU5-2</id>
        <name>2</name>
        <name>Latarcin 4a-2</name>
        <sequence type="displayed"/>
    </isoform>
    <isoform>
        <id>Q1ELU5-1</id>
        <name>1</name>
        <name>Latarcin 4a-1</name>
        <sequence type="described" ref="VSP_020546"/>
    </isoform>
</comment>
<comment type="tissue specificity">
    <text evidence="8 9">Expressed by the venom gland.</text>
</comment>
<comment type="domain">
    <text evidence="5">M-zodatoxin-Lt4a: Probably forms an alpha-helix which disrupts target cell membranes.</text>
</comment>
<comment type="PTM">
    <text evidence="6">Cleavage of the propeptide depends on the processing quadruplet motif (PQM) (XXXR, with at least one of X being E) and the inverted PQM (RXXX, with at least one of X being E).</text>
</comment>
<comment type="mass spectrometry" mass="2900.9" method="MALDI" evidence="3">
    <molecule>M-zodatoxin-Lt4a peptide</molecule>
    <text>M-zodatoxin-Lt4a peptide.</text>
</comment>
<comment type="mass spectrometry" mass="2902.7" method="MALDI" evidence="4">
    <molecule>M-zodatoxin-Lt4a peptide</molecule>
    <text>M-zodatoxin-Lt4a peptide.</text>
</comment>
<comment type="mass spectrometry" mass="2068.5" method="MALDI" evidence="4">
    <molecule>Repetitive polypeptide element type 1a</molecule>
    <text>Repetitive polypeptide element type 1a.</text>
</comment>
<comment type="mass spectrometry" mass="2099.6" method="MALDI" evidence="4">
    <molecule>Repetitive polypeptide element type 1b</molecule>
    <text>Repetitive polypeptide element type 1b.</text>
</comment>
<comment type="similarity">
    <text evidence="7">Belongs to the cationic peptide 03 (latarcin) family. 04 subfamily.</text>
</comment>
<proteinExistence type="evidence at protein level"/>